<organism>
    <name type="scientific">Oryctolagus cuniculus</name>
    <name type="common">Rabbit</name>
    <dbReference type="NCBI Taxonomy" id="9986"/>
    <lineage>
        <taxon>Eukaryota</taxon>
        <taxon>Metazoa</taxon>
        <taxon>Chordata</taxon>
        <taxon>Craniata</taxon>
        <taxon>Vertebrata</taxon>
        <taxon>Euteleostomi</taxon>
        <taxon>Mammalia</taxon>
        <taxon>Eutheria</taxon>
        <taxon>Euarchontoglires</taxon>
        <taxon>Glires</taxon>
        <taxon>Lagomorpha</taxon>
        <taxon>Leporidae</taxon>
        <taxon>Oryctolagus</taxon>
    </lineage>
</organism>
<gene>
    <name type="primary">PRKG1</name>
</gene>
<dbReference type="EC" id="2.7.11.12"/>
<dbReference type="EMBL" id="AF076969">
    <property type="protein sequence ID" value="AAC31192.1"/>
    <property type="molecule type" value="mRNA"/>
</dbReference>
<dbReference type="RefSeq" id="NP_001075511.1">
    <molecule id="O77676-1"/>
    <property type="nucleotide sequence ID" value="NM_001082042.2"/>
</dbReference>
<dbReference type="BMRB" id="O77676"/>
<dbReference type="SMR" id="O77676"/>
<dbReference type="FunCoup" id="O77676">
    <property type="interactions" value="542"/>
</dbReference>
<dbReference type="STRING" id="9986.ENSOCUP00000031575"/>
<dbReference type="PaxDb" id="9986-ENSOCUP00000009871"/>
<dbReference type="GeneID" id="100008694"/>
<dbReference type="KEGG" id="ocu:100008694"/>
<dbReference type="CTD" id="5592"/>
<dbReference type="eggNOG" id="KOG0614">
    <property type="taxonomic scope" value="Eukaryota"/>
</dbReference>
<dbReference type="InParanoid" id="O77676"/>
<dbReference type="OrthoDB" id="63267at2759"/>
<dbReference type="BRENDA" id="2.7.11.12">
    <property type="organism ID" value="1749"/>
</dbReference>
<dbReference type="Proteomes" id="UP000001811">
    <property type="component" value="Unplaced"/>
</dbReference>
<dbReference type="GO" id="GO:0005737">
    <property type="term" value="C:cytoplasm"/>
    <property type="evidence" value="ECO:0000250"/>
    <property type="project" value="UniProtKB"/>
</dbReference>
<dbReference type="GO" id="GO:0005524">
    <property type="term" value="F:ATP binding"/>
    <property type="evidence" value="ECO:0007669"/>
    <property type="project" value="UniProtKB-KW"/>
</dbReference>
<dbReference type="GO" id="GO:0005246">
    <property type="term" value="F:calcium channel regulator activity"/>
    <property type="evidence" value="ECO:0000250"/>
    <property type="project" value="UniProtKB"/>
</dbReference>
<dbReference type="GO" id="GO:0030553">
    <property type="term" value="F:cGMP binding"/>
    <property type="evidence" value="ECO:0007669"/>
    <property type="project" value="UniProtKB-KW"/>
</dbReference>
<dbReference type="GO" id="GO:0004692">
    <property type="term" value="F:cGMP-dependent protein kinase activity"/>
    <property type="evidence" value="ECO:0000250"/>
    <property type="project" value="UniProtKB"/>
</dbReference>
<dbReference type="GO" id="GO:0106310">
    <property type="term" value="F:protein serine kinase activity"/>
    <property type="evidence" value="ECO:0007669"/>
    <property type="project" value="RHEA"/>
</dbReference>
<dbReference type="GO" id="GO:0090331">
    <property type="term" value="P:negative regulation of platelet aggregation"/>
    <property type="evidence" value="ECO:0000250"/>
    <property type="project" value="UniProtKB"/>
</dbReference>
<dbReference type="GO" id="GO:0043087">
    <property type="term" value="P:regulation of GTPase activity"/>
    <property type="evidence" value="ECO:0000250"/>
    <property type="project" value="UniProtKB"/>
</dbReference>
<dbReference type="CDD" id="cd00038">
    <property type="entry name" value="CAP_ED"/>
    <property type="match status" value="2"/>
</dbReference>
<dbReference type="CDD" id="cd12085">
    <property type="entry name" value="DD_cGKI-alpha"/>
    <property type="match status" value="1"/>
</dbReference>
<dbReference type="CDD" id="cd05572">
    <property type="entry name" value="STKc_cGK"/>
    <property type="match status" value="1"/>
</dbReference>
<dbReference type="FunFam" id="3.30.200.20:FF:000005">
    <property type="entry name" value="cAMP-dependent protein kinase catalytic subunit"/>
    <property type="match status" value="1"/>
</dbReference>
<dbReference type="FunFam" id="1.10.510.10:FF:000096">
    <property type="entry name" value="cGMP-dependent protein kinase"/>
    <property type="match status" value="1"/>
</dbReference>
<dbReference type="FunFam" id="2.60.120.10:FF:000035">
    <property type="entry name" value="cGMP-dependent protein kinase"/>
    <property type="match status" value="1"/>
</dbReference>
<dbReference type="FunFam" id="2.60.120.10:FF:000037">
    <property type="entry name" value="cGMP-dependent protein kinase"/>
    <property type="match status" value="1"/>
</dbReference>
<dbReference type="FunFam" id="1.20.5.490:FF:000006">
    <property type="entry name" value="cGMP-dependent protein kinase 1"/>
    <property type="match status" value="1"/>
</dbReference>
<dbReference type="Gene3D" id="2.60.120.10">
    <property type="entry name" value="Jelly Rolls"/>
    <property type="match status" value="2"/>
</dbReference>
<dbReference type="Gene3D" id="3.30.200.20">
    <property type="entry name" value="Phosphorylase Kinase, domain 1"/>
    <property type="match status" value="1"/>
</dbReference>
<dbReference type="Gene3D" id="1.20.5.490">
    <property type="entry name" value="Single helix bin"/>
    <property type="match status" value="1"/>
</dbReference>
<dbReference type="Gene3D" id="1.10.510.10">
    <property type="entry name" value="Transferase(Phosphotransferase) domain 1"/>
    <property type="match status" value="1"/>
</dbReference>
<dbReference type="InterPro" id="IPR000961">
    <property type="entry name" value="AGC-kinase_C"/>
</dbReference>
<dbReference type="InterPro" id="IPR002374">
    <property type="entry name" value="cGMP_dep_kinase"/>
</dbReference>
<dbReference type="InterPro" id="IPR018488">
    <property type="entry name" value="cNMP-bd_CS"/>
</dbReference>
<dbReference type="InterPro" id="IPR000595">
    <property type="entry name" value="cNMP-bd_dom"/>
</dbReference>
<dbReference type="InterPro" id="IPR018490">
    <property type="entry name" value="cNMP-bd_dom_sf"/>
</dbReference>
<dbReference type="InterPro" id="IPR011009">
    <property type="entry name" value="Kinase-like_dom_sf"/>
</dbReference>
<dbReference type="InterPro" id="IPR031831">
    <property type="entry name" value="PKcGMP_CC"/>
</dbReference>
<dbReference type="InterPro" id="IPR000719">
    <property type="entry name" value="Prot_kinase_dom"/>
</dbReference>
<dbReference type="InterPro" id="IPR017441">
    <property type="entry name" value="Protein_kinase_ATP_BS"/>
</dbReference>
<dbReference type="InterPro" id="IPR014710">
    <property type="entry name" value="RmlC-like_jellyroll"/>
</dbReference>
<dbReference type="InterPro" id="IPR008271">
    <property type="entry name" value="Ser/Thr_kinase_AS"/>
</dbReference>
<dbReference type="InterPro" id="IPR035014">
    <property type="entry name" value="STKc_cGK"/>
</dbReference>
<dbReference type="PANTHER" id="PTHR24353:SF68">
    <property type="match status" value="1"/>
</dbReference>
<dbReference type="PANTHER" id="PTHR24353">
    <property type="entry name" value="CYCLIC NUCLEOTIDE-DEPENDENT PROTEIN KINASE"/>
    <property type="match status" value="1"/>
</dbReference>
<dbReference type="Pfam" id="PF00027">
    <property type="entry name" value="cNMP_binding"/>
    <property type="match status" value="2"/>
</dbReference>
<dbReference type="Pfam" id="PF16808">
    <property type="entry name" value="PKcGMP_CC"/>
    <property type="match status" value="1"/>
</dbReference>
<dbReference type="Pfam" id="PF00069">
    <property type="entry name" value="Pkinase"/>
    <property type="match status" value="1"/>
</dbReference>
<dbReference type="PIRSF" id="PIRSF000559">
    <property type="entry name" value="cGMP-dep_kinase"/>
    <property type="match status" value="1"/>
</dbReference>
<dbReference type="PRINTS" id="PR00104">
    <property type="entry name" value="CGMPKINASE"/>
</dbReference>
<dbReference type="SMART" id="SM00100">
    <property type="entry name" value="cNMP"/>
    <property type="match status" value="2"/>
</dbReference>
<dbReference type="SMART" id="SM00133">
    <property type="entry name" value="S_TK_X"/>
    <property type="match status" value="1"/>
</dbReference>
<dbReference type="SMART" id="SM00220">
    <property type="entry name" value="S_TKc"/>
    <property type="match status" value="1"/>
</dbReference>
<dbReference type="SUPFAM" id="SSF51206">
    <property type="entry name" value="cAMP-binding domain-like"/>
    <property type="match status" value="2"/>
</dbReference>
<dbReference type="SUPFAM" id="SSF56112">
    <property type="entry name" value="Protein kinase-like (PK-like)"/>
    <property type="match status" value="1"/>
</dbReference>
<dbReference type="PROSITE" id="PS51285">
    <property type="entry name" value="AGC_KINASE_CTER"/>
    <property type="match status" value="1"/>
</dbReference>
<dbReference type="PROSITE" id="PS00889">
    <property type="entry name" value="CNMP_BINDING_2"/>
    <property type="match status" value="2"/>
</dbReference>
<dbReference type="PROSITE" id="PS50042">
    <property type="entry name" value="CNMP_BINDING_3"/>
    <property type="match status" value="2"/>
</dbReference>
<dbReference type="PROSITE" id="PS00107">
    <property type="entry name" value="PROTEIN_KINASE_ATP"/>
    <property type="match status" value="1"/>
</dbReference>
<dbReference type="PROSITE" id="PS50011">
    <property type="entry name" value="PROTEIN_KINASE_DOM"/>
    <property type="match status" value="1"/>
</dbReference>
<dbReference type="PROSITE" id="PS00108">
    <property type="entry name" value="PROTEIN_KINASE_ST"/>
    <property type="match status" value="1"/>
</dbReference>
<accession>O77676</accession>
<reference key="1">
    <citation type="journal article" date="1999" name="J. Pharmacol. Exp. Ther.">
        <title>Analysis of expression of cGMP-dependent protein kinase in rabbit heart cells.</title>
        <authorList>
            <person name="Kumar R."/>
            <person name="Joyner R.W."/>
            <person name="Komalavilas P."/>
            <person name="Lincoln T.M."/>
        </authorList>
    </citation>
    <scope>NUCLEOTIDE SEQUENCE [MRNA]</scope>
    <source>
        <strain>New Zealand white</strain>
        <tissue>Heart</tissue>
    </source>
</reference>
<reference key="2">
    <citation type="journal article" date="2007" name="Am. J. Physiol.">
        <title>Inhibition of Galphaq-dependent PLC-beta1 activity by PKG and PKA is mediated by phosphorylation of RGS4 and GRK2.</title>
        <authorList>
            <person name="Huang J."/>
            <person name="Zhou H."/>
            <person name="Mahavadi S."/>
            <person name="Sriwai W."/>
            <person name="Murthy K.S."/>
        </authorList>
    </citation>
    <scope>FUNCTION IN PHOSPHORYLATION OF RGS4</scope>
</reference>
<feature type="initiator methionine" description="Removed" evidence="2">
    <location>
        <position position="1"/>
    </location>
</feature>
<feature type="chain" id="PRO_0000086116" description="cGMP-dependent protein kinase 1">
    <location>
        <begin position="2"/>
        <end position="671"/>
    </location>
</feature>
<feature type="domain" description="Protein kinase" evidence="5">
    <location>
        <begin position="360"/>
        <end position="619"/>
    </location>
</feature>
<feature type="domain" description="AGC-kinase C-terminal" evidence="6">
    <location>
        <begin position="620"/>
        <end position="671"/>
    </location>
</feature>
<feature type="region of interest" description="Required for dimerization" evidence="1">
    <location>
        <begin position="2"/>
        <end position="102"/>
    </location>
</feature>
<feature type="region of interest" description="Leucine-zipper">
    <location>
        <begin position="9"/>
        <end position="44"/>
    </location>
</feature>
<feature type="region of interest" description="Autoinhibitory domain" evidence="1">
    <location>
        <begin position="50"/>
        <end position="75"/>
    </location>
</feature>
<feature type="region of interest" description="cGMP-binding, high affinity" evidence="1">
    <location>
        <begin position="103"/>
        <end position="220"/>
    </location>
</feature>
<feature type="region of interest" description="cGMP-binding, low affinity" evidence="1">
    <location>
        <begin position="221"/>
        <end position="341"/>
    </location>
</feature>
<feature type="region of interest" description="Disordered" evidence="8">
    <location>
        <begin position="635"/>
        <end position="671"/>
    </location>
</feature>
<feature type="coiled-coil region" evidence="1">
    <location>
        <begin position="2"/>
        <end position="59"/>
    </location>
</feature>
<feature type="compositionally biased region" description="Acidic residues" evidence="8">
    <location>
        <begin position="652"/>
        <end position="661"/>
    </location>
</feature>
<feature type="active site" description="Proton acceptor" evidence="5 7">
    <location>
        <position position="484"/>
    </location>
</feature>
<feature type="binding site" evidence="4">
    <location>
        <begin position="167"/>
        <end position="170"/>
    </location>
    <ligand>
        <name>3',5'-cyclic GMP</name>
        <dbReference type="ChEBI" id="CHEBI:57746"/>
        <label>1</label>
    </ligand>
</feature>
<feature type="binding site" evidence="4">
    <location>
        <begin position="177"/>
        <end position="178"/>
    </location>
    <ligand>
        <name>3',5'-cyclic GMP</name>
        <dbReference type="ChEBI" id="CHEBI:57746"/>
        <label>1</label>
    </ligand>
</feature>
<feature type="binding site" evidence="4">
    <location>
        <position position="282"/>
    </location>
    <ligand>
        <name>3',5'-cyclic GMP</name>
        <dbReference type="ChEBI" id="CHEBI:57746"/>
        <label>2</label>
    </ligand>
</feature>
<feature type="binding site" evidence="4">
    <location>
        <begin position="291"/>
        <end position="294"/>
    </location>
    <ligand>
        <name>3',5'-cyclic GMP</name>
        <dbReference type="ChEBI" id="CHEBI:57746"/>
        <label>2</label>
    </ligand>
</feature>
<feature type="binding site" evidence="4">
    <location>
        <begin position="301"/>
        <end position="302"/>
    </location>
    <ligand>
        <name>3',5'-cyclic GMP</name>
        <dbReference type="ChEBI" id="CHEBI:57746"/>
        <label>2</label>
    </ligand>
</feature>
<feature type="binding site" evidence="4">
    <location>
        <position position="336"/>
    </location>
    <ligand>
        <name>3',5'-cyclic GMP</name>
        <dbReference type="ChEBI" id="CHEBI:57746"/>
        <label>2</label>
    </ligand>
</feature>
<feature type="binding site" evidence="5">
    <location>
        <begin position="366"/>
        <end position="374"/>
    </location>
    <ligand>
        <name>ATP</name>
        <dbReference type="ChEBI" id="CHEBI:30616"/>
    </ligand>
</feature>
<feature type="binding site" evidence="5">
    <location>
        <position position="390"/>
    </location>
    <ligand>
        <name>ATP</name>
        <dbReference type="ChEBI" id="CHEBI:30616"/>
    </ligand>
</feature>
<feature type="modified residue" description="N-acetylserine" evidence="2">
    <location>
        <position position="2"/>
    </location>
</feature>
<feature type="modified residue" description="Phosphothreonine; by autocatalysis" evidence="2">
    <location>
        <position position="59"/>
    </location>
</feature>
<feature type="modified residue" description="Phosphothreonine" evidence="3">
    <location>
        <position position="515"/>
    </location>
</feature>
<feature type="disulfide bond" description="Interchain" evidence="1">
    <location>
        <position position="43"/>
    </location>
</feature>
<feature type="sequence variant">
    <original>F</original>
    <variation>S</variation>
    <location>
        <position position="558"/>
    </location>
</feature>
<sequence length="671" mass="76454">MSELEEDFAKILMLKEERIKELEKRLSEKEEEIQELKRKLHKCQSVLPVPSTHIGPRTTRAQGISAEPQTYRSFHDLRQAFRKFTKFERSKDLIKEAILDNDFMKNLELSQIQEIVDCMYPVEYGKDSCIIKEGDVGSLAYVMEDGKVEVTKEGVKLCTMGPGKVFGELAILYNCTRTATVKTLVNVKLWAIDRQCFQTIMMRTGLIKHTEYMEFLKSVPTFQSLPEEILSKLADVLEETHYENEEYSIRQGARGDTFFIISKGKVNVTREDSPSEDPIFLRTLGKGDWFGEKALQGEDVRTANVIAAEAVTCLVIDRDSFKHLIGGLDDVSNKAYEDAEAKAKYEAEAAFFANLKLSDFNIIDTLGVGGFGRVELVQLKSEESKTFAMKILKKRHIVDTRQQEHIRSEKQIMQGAHSDFIVRLYRTFKDSKYLYMLMEACLGGELWTILRDRGSFEDSTTRFYTACVVEAFAYLHSKGIIYRDLKPENLILDHRGYAKLVDFGFAKKIGFGKKTWTFCGTPEYVAPEIILNKGHDISADYWSLGILMYELLTGSPPFSGPDPMKTYNIILRGIDMIEFPKKIAKNAANLIKKLCRDNPSERLGNLKNGVKDIQKHKWFEGFNWEGLRKGTLTPPIIPSVASPTDTSNFDGFPEDNDEPPPDDNSGWDIDF</sequence>
<keyword id="KW-0007">Acetylation</keyword>
<keyword id="KW-0021">Allosteric enzyme</keyword>
<keyword id="KW-0025">Alternative splicing</keyword>
<keyword id="KW-0067">ATP-binding</keyword>
<keyword id="KW-0140">cGMP</keyword>
<keyword id="KW-0142">cGMP-binding</keyword>
<keyword id="KW-0175">Coiled coil</keyword>
<keyword id="KW-0963">Cytoplasm</keyword>
<keyword id="KW-1015">Disulfide bond</keyword>
<keyword id="KW-0418">Kinase</keyword>
<keyword id="KW-0547">Nucleotide-binding</keyword>
<keyword id="KW-0597">Phosphoprotein</keyword>
<keyword id="KW-1185">Reference proteome</keyword>
<keyword id="KW-0723">Serine/threonine-protein kinase</keyword>
<keyword id="KW-0808">Transferase</keyword>
<evidence type="ECO:0000250" key="1"/>
<evidence type="ECO:0000250" key="2">
    <source>
        <dbReference type="UniProtKB" id="P00516"/>
    </source>
</evidence>
<evidence type="ECO:0000250" key="3">
    <source>
        <dbReference type="UniProtKB" id="P0C605"/>
    </source>
</evidence>
<evidence type="ECO:0000250" key="4">
    <source>
        <dbReference type="UniProtKB" id="Q13976"/>
    </source>
</evidence>
<evidence type="ECO:0000255" key="5">
    <source>
        <dbReference type="PROSITE-ProRule" id="PRU00159"/>
    </source>
</evidence>
<evidence type="ECO:0000255" key="6">
    <source>
        <dbReference type="PROSITE-ProRule" id="PRU00618"/>
    </source>
</evidence>
<evidence type="ECO:0000255" key="7">
    <source>
        <dbReference type="PROSITE-ProRule" id="PRU10027"/>
    </source>
</evidence>
<evidence type="ECO:0000256" key="8">
    <source>
        <dbReference type="SAM" id="MobiDB-lite"/>
    </source>
</evidence>
<evidence type="ECO:0000269" key="9">
    <source>
    </source>
</evidence>
<evidence type="ECO:0000305" key="10"/>
<protein>
    <recommendedName>
        <fullName>cGMP-dependent protein kinase 1</fullName>
        <shortName>cGK 1</shortName>
        <shortName>cGK1</shortName>
        <ecNumber>2.7.11.12</ecNumber>
    </recommendedName>
</protein>
<name>KGP1_RABIT</name>
<comment type="function">
    <text evidence="1 9">Serine/threonine protein kinase that acts as a key mediator of the nitric oxide (NO)/cGMP signaling pathway. GMP binding activates PRKG1, which phosphorylates serines and threonines on many cellular proteins. Numerous protein targets for PRKG1 phosphorylation are implicated in modulating cellular calcium, but the contribution of each of these targets may vary substantially among cell types. Proteins that are phosphorylated by PRKG1 regulate platelet activation and adhesion, smooth muscle contraction, cardiac function, gene expression, feedback of the NO-signaling pathway, and other processes involved in several aspects of the CNS like axon guidance, hippocampal and cerebellar learning, circadian rhythm and nociception. Smooth muscle relaxation is mediated through lowering of intracellular free calcium, by desensitization of contractile proteins to calcium, and by decrease in the contractile state of smooth muscle or in platelet activation. Regulates intracellular calcium levels via several pathways: phosphorylates IRAG1 and inhibits IP3-induced Ca(2+) release from intracellular stores, phosphorylation of KCNMA1 (BKCa) channels decreases intracellular Ca(2+) levels, which leads to increased opening of this channel. PRKG1 phosphorylates the canonical transient receptor potential channel (TRPC) family which inactivates the associated inward calcium current. Another mode of action of NO/cGMP/PKGI signaling involves PKGI-mediated inactivation of the Ras homolog gene family member A (RhoA). Phosphorylation of RHOA by PRKG1 blocks the action of this protein in myriad processes: regulation of RHOA translocation; decreasing contraction; controlling vesicle trafficking, reduction of myosin light chain phosphorylation resulting in vasorelaxation. Activation of PRKG1 by NO signaling also alters gene expression in a number of tissues. In smooth muscle cells, increased cGMP and PRKG1 activity influence expression of smooth muscle-specific contractile proteins, levels of proteins in the NO/cGMP signaling pathway, down-regulation of the matrix proteins osteopontin and thrombospondin-1 to limit smooth muscle cell migration and phenotype. Regulates vasodilator-stimulated phosphoprotein (VASP) functions in platelets and smooth muscle (By similarity).</text>
</comment>
<comment type="catalytic activity">
    <reaction>
        <text>L-seryl-[protein] + ATP = O-phospho-L-seryl-[protein] + ADP + H(+)</text>
        <dbReference type="Rhea" id="RHEA:17989"/>
        <dbReference type="Rhea" id="RHEA-COMP:9863"/>
        <dbReference type="Rhea" id="RHEA-COMP:11604"/>
        <dbReference type="ChEBI" id="CHEBI:15378"/>
        <dbReference type="ChEBI" id="CHEBI:29999"/>
        <dbReference type="ChEBI" id="CHEBI:30616"/>
        <dbReference type="ChEBI" id="CHEBI:83421"/>
        <dbReference type="ChEBI" id="CHEBI:456216"/>
        <dbReference type="EC" id="2.7.11.12"/>
    </reaction>
</comment>
<comment type="catalytic activity">
    <reaction>
        <text>L-threonyl-[protein] + ATP = O-phospho-L-threonyl-[protein] + ADP + H(+)</text>
        <dbReference type="Rhea" id="RHEA:46608"/>
        <dbReference type="Rhea" id="RHEA-COMP:11060"/>
        <dbReference type="Rhea" id="RHEA-COMP:11605"/>
        <dbReference type="ChEBI" id="CHEBI:15378"/>
        <dbReference type="ChEBI" id="CHEBI:30013"/>
        <dbReference type="ChEBI" id="CHEBI:30616"/>
        <dbReference type="ChEBI" id="CHEBI:61977"/>
        <dbReference type="ChEBI" id="CHEBI:456216"/>
        <dbReference type="EC" id="2.7.11.12"/>
    </reaction>
</comment>
<comment type="activity regulation">
    <text evidence="1">In the absence of cGMP, PRKG1 activity is suppressed by autoinhibitory contacts.</text>
</comment>
<comment type="subunit">
    <text evidence="1">Isoform alpha: parallel homodimer or heterodimer and also heterotetramer. Interacts directly with PPP1R12A. Non-covalent dimer of dimer of PRKG1-PRKG1 and PPP1R12A-PPP1R12A. This interaction targets PRKG1 to stress fibers to mediate smooth muscle cell relaxation and vasodilation in responses to rises in cGMP (By similarity). Isoform beta: antiparallel homodimer. Part of cGMP kinase signaling complex at least composed of ACTA2/alpha-actin, CNN1/calponin H1, PLN/phospholamban, PRKG1 and ITPR1. Interacts with IRAG1 (By similarity). Forms a stable complex with ITPR1, IRAG1, and isoform beta of PRKG1 (By similarity). Interacts with TRPC7 (via ankyrin repeat domain) (By similarity). Isoform alpha interacts with RGS2 (By similarity). Interacts with GTF2I (By similarity).</text>
</comment>
<comment type="subcellular location">
    <subcellularLocation>
        <location evidence="1">Cytoplasm</location>
    </subcellularLocation>
    <text evidence="1">Colocalized with TRPC7 in the plasma membrane.</text>
</comment>
<comment type="alternative products">
    <event type="alternative splicing"/>
    <isoform>
        <id>O77676-1</id>
        <name>Alpha</name>
        <name>CGK1-alpha</name>
        <sequence type="displayed"/>
    </isoform>
    <isoform>
        <id>O77676-2</id>
        <name>Beta</name>
        <name>CGK1-beta</name>
        <sequence type="not described"/>
    </isoform>
</comment>
<comment type="domain">
    <text evidence="1">Composed of an N-terminal leucine-zipper domain followed by an autoinhibitory domain, which mediate homodimer formation and inhibit kinase activity, respectively. Next, two cGMP-binding domains are followed by the catalytic domain at the C-terminus. Binding of cGMP to cGMP-binding domains results in a conformational change that activates kinase activity by removing the autoinhibitory domain from the catalytic cleft leaving the catalytic domain free to phosphorylate downstream substrates. Isoforms alpha and beta have identical cGMP-binding and catalytic domains but differ in their leucine zipper and autoinhibitory sequences and therefore differ in their dimerization substrates and kinase enzyme activity (By similarity).</text>
</comment>
<comment type="domain">
    <text evidence="1">Heterotetramerization is mediated by the interaction between a coiled-coil of PRKG1 and the leucine/isoleucine zipper of PPP1R12A/MBS, the myosin-binding subunit of the myosin phosphatase.</text>
</comment>
<comment type="PTM">
    <text evidence="1">Autophosphorylation increases kinase activity.</text>
</comment>
<comment type="PTM">
    <text evidence="1">65 kDa monomer is produced by proteolytic cleavage.</text>
</comment>
<comment type="similarity">
    <text evidence="10">Belongs to the protein kinase superfamily. AGC Ser/Thr protein kinase family. cGMP subfamily.</text>
</comment>
<proteinExistence type="evidence at protein level"/>